<proteinExistence type="inferred from homology"/>
<sequence length="364" mass="40956">MEYTTLIARLKTASKSFVNLEMQLADPDIANNPKKLELIAKERAKLEPLVLDFNQLLDTDKEIDDSRQLLKDNRNDKDMELLINEELCNLEVLKNSLIQKVTIALLPKDPRDERSVMLEIRAGAGGNEACIWAGDLARMYERYGQKIGWSVKPISASESDMGGFKELVISIKGDSVYSQLKFEAGVHRVQRVPATESQGRVHTSTATVAVMPEADPVEVKIDPSDLEIGTARSGGAGGQNVNKVETAIDLIHKPTGIRVFCTQERSQLQNRERAMEILRAKLYEIQLKEANDKERSQRLMQVGTGDRSEKIRTYNFKDNRTTDHRLGSNFALEPILAGQLDEVIDACIAQEQKRIMEDFNENEN</sequence>
<comment type="function">
    <text evidence="1">Peptide chain release factor 1 directs the termination of translation in response to the peptide chain termination codons UAG and UAA.</text>
</comment>
<comment type="subcellular location">
    <subcellularLocation>
        <location evidence="1">Cytoplasm</location>
    </subcellularLocation>
</comment>
<comment type="PTM">
    <text evidence="1">Methylated by PrmC. Methylation increases the termination efficiency of RF1.</text>
</comment>
<comment type="similarity">
    <text evidence="1">Belongs to the prokaryotic/mitochondrial release factor family.</text>
</comment>
<organism>
    <name type="scientific">Prochlorococcus marinus (strain MIT 9515)</name>
    <dbReference type="NCBI Taxonomy" id="167542"/>
    <lineage>
        <taxon>Bacteria</taxon>
        <taxon>Bacillati</taxon>
        <taxon>Cyanobacteriota</taxon>
        <taxon>Cyanophyceae</taxon>
        <taxon>Synechococcales</taxon>
        <taxon>Prochlorococcaceae</taxon>
        <taxon>Prochlorococcus</taxon>
    </lineage>
</organism>
<dbReference type="EMBL" id="CP000552">
    <property type="protein sequence ID" value="ABM72918.1"/>
    <property type="molecule type" value="Genomic_DNA"/>
</dbReference>
<dbReference type="RefSeq" id="WP_011821010.1">
    <property type="nucleotide sequence ID" value="NC_008817.1"/>
</dbReference>
<dbReference type="SMR" id="A2BYQ7"/>
<dbReference type="STRING" id="167542.P9515_17111"/>
<dbReference type="GeneID" id="60201419"/>
<dbReference type="KEGG" id="pmc:P9515_17111"/>
<dbReference type="eggNOG" id="COG0216">
    <property type="taxonomic scope" value="Bacteria"/>
</dbReference>
<dbReference type="HOGENOM" id="CLU_036856_0_1_3"/>
<dbReference type="OrthoDB" id="9806673at2"/>
<dbReference type="Proteomes" id="UP000001589">
    <property type="component" value="Chromosome"/>
</dbReference>
<dbReference type="GO" id="GO:0005737">
    <property type="term" value="C:cytoplasm"/>
    <property type="evidence" value="ECO:0007669"/>
    <property type="project" value="UniProtKB-SubCell"/>
</dbReference>
<dbReference type="GO" id="GO:0016149">
    <property type="term" value="F:translation release factor activity, codon specific"/>
    <property type="evidence" value="ECO:0007669"/>
    <property type="project" value="UniProtKB-UniRule"/>
</dbReference>
<dbReference type="FunFam" id="3.30.160.20:FF:000004">
    <property type="entry name" value="Peptide chain release factor 1"/>
    <property type="match status" value="1"/>
</dbReference>
<dbReference type="FunFam" id="3.30.70.1660:FF:000002">
    <property type="entry name" value="Peptide chain release factor 1"/>
    <property type="match status" value="1"/>
</dbReference>
<dbReference type="Gene3D" id="3.30.160.20">
    <property type="match status" value="1"/>
</dbReference>
<dbReference type="Gene3D" id="3.30.70.1660">
    <property type="match status" value="1"/>
</dbReference>
<dbReference type="Gene3D" id="6.10.140.1950">
    <property type="match status" value="1"/>
</dbReference>
<dbReference type="HAMAP" id="MF_00093">
    <property type="entry name" value="Rel_fac_1"/>
    <property type="match status" value="1"/>
</dbReference>
<dbReference type="InterPro" id="IPR005139">
    <property type="entry name" value="PCRF"/>
</dbReference>
<dbReference type="InterPro" id="IPR000352">
    <property type="entry name" value="Pep_chain_release_fac_I"/>
</dbReference>
<dbReference type="InterPro" id="IPR045853">
    <property type="entry name" value="Pep_chain_release_fac_I_sf"/>
</dbReference>
<dbReference type="InterPro" id="IPR050057">
    <property type="entry name" value="Prokaryotic/Mito_RF"/>
</dbReference>
<dbReference type="InterPro" id="IPR004373">
    <property type="entry name" value="RF-1"/>
</dbReference>
<dbReference type="NCBIfam" id="TIGR00019">
    <property type="entry name" value="prfA"/>
    <property type="match status" value="1"/>
</dbReference>
<dbReference type="NCBIfam" id="NF001859">
    <property type="entry name" value="PRK00591.1"/>
    <property type="match status" value="1"/>
</dbReference>
<dbReference type="PANTHER" id="PTHR43804">
    <property type="entry name" value="LD18447P"/>
    <property type="match status" value="1"/>
</dbReference>
<dbReference type="PANTHER" id="PTHR43804:SF8">
    <property type="entry name" value="PEPTIDE CHAIN RELEASE FACTOR APG3, CHLOROPLASTIC"/>
    <property type="match status" value="1"/>
</dbReference>
<dbReference type="Pfam" id="PF03462">
    <property type="entry name" value="PCRF"/>
    <property type="match status" value="1"/>
</dbReference>
<dbReference type="Pfam" id="PF00472">
    <property type="entry name" value="RF-1"/>
    <property type="match status" value="1"/>
</dbReference>
<dbReference type="SMART" id="SM00937">
    <property type="entry name" value="PCRF"/>
    <property type="match status" value="1"/>
</dbReference>
<dbReference type="SUPFAM" id="SSF75620">
    <property type="entry name" value="Release factor"/>
    <property type="match status" value="1"/>
</dbReference>
<dbReference type="PROSITE" id="PS00745">
    <property type="entry name" value="RF_PROK_I"/>
    <property type="match status" value="1"/>
</dbReference>
<name>RF1_PROM5</name>
<evidence type="ECO:0000255" key="1">
    <source>
        <dbReference type="HAMAP-Rule" id="MF_00093"/>
    </source>
</evidence>
<protein>
    <recommendedName>
        <fullName evidence="1">Peptide chain release factor 1</fullName>
        <shortName evidence="1">RF-1</shortName>
    </recommendedName>
</protein>
<keyword id="KW-0963">Cytoplasm</keyword>
<keyword id="KW-0488">Methylation</keyword>
<keyword id="KW-0648">Protein biosynthesis</keyword>
<gene>
    <name evidence="1" type="primary">prfA</name>
    <name type="ordered locus">P9515_17111</name>
</gene>
<reference key="1">
    <citation type="journal article" date="2007" name="PLoS Genet.">
        <title>Patterns and implications of gene gain and loss in the evolution of Prochlorococcus.</title>
        <authorList>
            <person name="Kettler G.C."/>
            <person name="Martiny A.C."/>
            <person name="Huang K."/>
            <person name="Zucker J."/>
            <person name="Coleman M.L."/>
            <person name="Rodrigue S."/>
            <person name="Chen F."/>
            <person name="Lapidus A."/>
            <person name="Ferriera S."/>
            <person name="Johnson J."/>
            <person name="Steglich C."/>
            <person name="Church G.M."/>
            <person name="Richardson P."/>
            <person name="Chisholm S.W."/>
        </authorList>
    </citation>
    <scope>NUCLEOTIDE SEQUENCE [LARGE SCALE GENOMIC DNA]</scope>
    <source>
        <strain>MIT 9515</strain>
    </source>
</reference>
<accession>A2BYQ7</accession>
<feature type="chain" id="PRO_1000093489" description="Peptide chain release factor 1">
    <location>
        <begin position="1"/>
        <end position="364"/>
    </location>
</feature>
<feature type="modified residue" description="N5-methylglutamine" evidence="1">
    <location>
        <position position="239"/>
    </location>
</feature>